<name>RL11_PROMT</name>
<gene>
    <name evidence="1" type="primary">rplK</name>
    <name evidence="1" type="synonym">rpl11</name>
    <name type="ordered locus">PMN2A_1571</name>
</gene>
<protein>
    <recommendedName>
        <fullName evidence="1">Large ribosomal subunit protein uL11</fullName>
    </recommendedName>
    <alternativeName>
        <fullName evidence="2">50S ribosomal protein L11</fullName>
    </alternativeName>
</protein>
<proteinExistence type="inferred from homology"/>
<feature type="chain" id="PRO_0000258185" description="Large ribosomal subunit protein uL11">
    <location>
        <begin position="1"/>
        <end position="141"/>
    </location>
</feature>
<evidence type="ECO:0000255" key="1">
    <source>
        <dbReference type="HAMAP-Rule" id="MF_00736"/>
    </source>
</evidence>
<evidence type="ECO:0000305" key="2"/>
<dbReference type="EMBL" id="CP000095">
    <property type="protein sequence ID" value="AAZ59059.1"/>
    <property type="molecule type" value="Genomic_DNA"/>
</dbReference>
<dbReference type="RefSeq" id="WP_011294204.1">
    <property type="nucleotide sequence ID" value="NC_007335.2"/>
</dbReference>
<dbReference type="SMR" id="Q46HG9"/>
<dbReference type="STRING" id="59920.PMN2A_1571"/>
<dbReference type="KEGG" id="pmn:PMN2A_1571"/>
<dbReference type="HOGENOM" id="CLU_074237_2_2_3"/>
<dbReference type="OrthoDB" id="9802408at2"/>
<dbReference type="PhylomeDB" id="Q46HG9"/>
<dbReference type="Proteomes" id="UP000002535">
    <property type="component" value="Chromosome"/>
</dbReference>
<dbReference type="GO" id="GO:0022625">
    <property type="term" value="C:cytosolic large ribosomal subunit"/>
    <property type="evidence" value="ECO:0007669"/>
    <property type="project" value="TreeGrafter"/>
</dbReference>
<dbReference type="GO" id="GO:0070180">
    <property type="term" value="F:large ribosomal subunit rRNA binding"/>
    <property type="evidence" value="ECO:0007669"/>
    <property type="project" value="UniProtKB-UniRule"/>
</dbReference>
<dbReference type="GO" id="GO:0003735">
    <property type="term" value="F:structural constituent of ribosome"/>
    <property type="evidence" value="ECO:0007669"/>
    <property type="project" value="InterPro"/>
</dbReference>
<dbReference type="GO" id="GO:0006412">
    <property type="term" value="P:translation"/>
    <property type="evidence" value="ECO:0007669"/>
    <property type="project" value="UniProtKB-UniRule"/>
</dbReference>
<dbReference type="CDD" id="cd00349">
    <property type="entry name" value="Ribosomal_L11"/>
    <property type="match status" value="1"/>
</dbReference>
<dbReference type="FunFam" id="1.10.10.250:FF:000001">
    <property type="entry name" value="50S ribosomal protein L11"/>
    <property type="match status" value="1"/>
</dbReference>
<dbReference type="FunFam" id="3.30.1550.10:FF:000001">
    <property type="entry name" value="50S ribosomal protein L11"/>
    <property type="match status" value="1"/>
</dbReference>
<dbReference type="Gene3D" id="1.10.10.250">
    <property type="entry name" value="Ribosomal protein L11, C-terminal domain"/>
    <property type="match status" value="1"/>
</dbReference>
<dbReference type="Gene3D" id="3.30.1550.10">
    <property type="entry name" value="Ribosomal protein L11/L12, N-terminal domain"/>
    <property type="match status" value="1"/>
</dbReference>
<dbReference type="HAMAP" id="MF_00736">
    <property type="entry name" value="Ribosomal_uL11"/>
    <property type="match status" value="1"/>
</dbReference>
<dbReference type="InterPro" id="IPR000911">
    <property type="entry name" value="Ribosomal_uL11"/>
</dbReference>
<dbReference type="InterPro" id="IPR006519">
    <property type="entry name" value="Ribosomal_uL11_bac-typ"/>
</dbReference>
<dbReference type="InterPro" id="IPR020783">
    <property type="entry name" value="Ribosomal_uL11_C"/>
</dbReference>
<dbReference type="InterPro" id="IPR036769">
    <property type="entry name" value="Ribosomal_uL11_C_sf"/>
</dbReference>
<dbReference type="InterPro" id="IPR020785">
    <property type="entry name" value="Ribosomal_uL11_CS"/>
</dbReference>
<dbReference type="InterPro" id="IPR020784">
    <property type="entry name" value="Ribosomal_uL11_N"/>
</dbReference>
<dbReference type="InterPro" id="IPR036796">
    <property type="entry name" value="Ribosomal_uL11_N_sf"/>
</dbReference>
<dbReference type="NCBIfam" id="TIGR01632">
    <property type="entry name" value="L11_bact"/>
    <property type="match status" value="1"/>
</dbReference>
<dbReference type="PANTHER" id="PTHR11661">
    <property type="entry name" value="60S RIBOSOMAL PROTEIN L12"/>
    <property type="match status" value="1"/>
</dbReference>
<dbReference type="PANTHER" id="PTHR11661:SF1">
    <property type="entry name" value="LARGE RIBOSOMAL SUBUNIT PROTEIN UL11M"/>
    <property type="match status" value="1"/>
</dbReference>
<dbReference type="Pfam" id="PF00298">
    <property type="entry name" value="Ribosomal_L11"/>
    <property type="match status" value="1"/>
</dbReference>
<dbReference type="Pfam" id="PF03946">
    <property type="entry name" value="Ribosomal_L11_N"/>
    <property type="match status" value="1"/>
</dbReference>
<dbReference type="SMART" id="SM00649">
    <property type="entry name" value="RL11"/>
    <property type="match status" value="1"/>
</dbReference>
<dbReference type="SUPFAM" id="SSF54747">
    <property type="entry name" value="Ribosomal L11/L12e N-terminal domain"/>
    <property type="match status" value="1"/>
</dbReference>
<dbReference type="SUPFAM" id="SSF46906">
    <property type="entry name" value="Ribosomal protein L11, C-terminal domain"/>
    <property type="match status" value="1"/>
</dbReference>
<dbReference type="PROSITE" id="PS00359">
    <property type="entry name" value="RIBOSOMAL_L11"/>
    <property type="match status" value="1"/>
</dbReference>
<accession>Q46HG9</accession>
<keyword id="KW-0488">Methylation</keyword>
<keyword id="KW-1185">Reference proteome</keyword>
<keyword id="KW-0687">Ribonucleoprotein</keyword>
<keyword id="KW-0689">Ribosomal protein</keyword>
<keyword id="KW-0694">RNA-binding</keyword>
<keyword id="KW-0699">rRNA-binding</keyword>
<reference key="1">
    <citation type="journal article" date="2007" name="PLoS Genet.">
        <title>Patterns and implications of gene gain and loss in the evolution of Prochlorococcus.</title>
        <authorList>
            <person name="Kettler G.C."/>
            <person name="Martiny A.C."/>
            <person name="Huang K."/>
            <person name="Zucker J."/>
            <person name="Coleman M.L."/>
            <person name="Rodrigue S."/>
            <person name="Chen F."/>
            <person name="Lapidus A."/>
            <person name="Ferriera S."/>
            <person name="Johnson J."/>
            <person name="Steglich C."/>
            <person name="Church G.M."/>
            <person name="Richardson P."/>
            <person name="Chisholm S.W."/>
        </authorList>
    </citation>
    <scope>NUCLEOTIDE SEQUENCE [LARGE SCALE GENOMIC DNA]</scope>
    <source>
        <strain>NATL2A</strain>
    </source>
</reference>
<organism>
    <name type="scientific">Prochlorococcus marinus (strain NATL2A)</name>
    <dbReference type="NCBI Taxonomy" id="59920"/>
    <lineage>
        <taxon>Bacteria</taxon>
        <taxon>Bacillati</taxon>
        <taxon>Cyanobacteriota</taxon>
        <taxon>Cyanophyceae</taxon>
        <taxon>Synechococcales</taxon>
        <taxon>Prochlorococcaceae</taxon>
        <taxon>Prochlorococcus</taxon>
    </lineage>
</organism>
<comment type="function">
    <text evidence="1">Forms part of the ribosomal stalk which helps the ribosome interact with GTP-bound translation factors.</text>
</comment>
<comment type="subunit">
    <text evidence="1">Part of the ribosomal stalk of the 50S ribosomal subunit. Interacts with L10 and the large rRNA to form the base of the stalk. L10 forms an elongated spine to which L12 dimers bind in a sequential fashion forming a multimeric L10(L12)X complex.</text>
</comment>
<comment type="PTM">
    <text evidence="1">One or more lysine residues are methylated.</text>
</comment>
<comment type="similarity">
    <text evidence="1">Belongs to the universal ribosomal protein uL11 family.</text>
</comment>
<sequence>MAKKVVALIKLALQAGKANPAPPVGPALGQHGVNIMAFCKEYNSRTQDKAGFVIPVEISVFEDRSFSFITKTPPASVLITKAAGIAKGSGESAKGSAGSISTSQLEEIAKTKLPDLNCSSIESAMKVIEGTAKNMGVSIKD</sequence>